<organism>
    <name type="scientific">Bartonella tribocorum (strain CIP 105476 / IBS 506)</name>
    <dbReference type="NCBI Taxonomy" id="382640"/>
    <lineage>
        <taxon>Bacteria</taxon>
        <taxon>Pseudomonadati</taxon>
        <taxon>Pseudomonadota</taxon>
        <taxon>Alphaproteobacteria</taxon>
        <taxon>Hyphomicrobiales</taxon>
        <taxon>Bartonellaceae</taxon>
        <taxon>Bartonella</taxon>
    </lineage>
</organism>
<proteinExistence type="inferred from homology"/>
<dbReference type="EC" id="2.1.2.3" evidence="1"/>
<dbReference type="EC" id="3.5.4.10" evidence="1"/>
<dbReference type="EMBL" id="AM260525">
    <property type="protein sequence ID" value="CAK02522.1"/>
    <property type="molecule type" value="Genomic_DNA"/>
</dbReference>
<dbReference type="RefSeq" id="WP_012232556.1">
    <property type="nucleotide sequence ID" value="NC_010161.1"/>
</dbReference>
<dbReference type="SMR" id="A9IZD0"/>
<dbReference type="KEGG" id="btr:BT_2562"/>
<dbReference type="eggNOG" id="COG0138">
    <property type="taxonomic scope" value="Bacteria"/>
</dbReference>
<dbReference type="HOGENOM" id="CLU_016316_5_2_5"/>
<dbReference type="UniPathway" id="UPA00074">
    <property type="reaction ID" value="UER00133"/>
</dbReference>
<dbReference type="UniPathway" id="UPA00074">
    <property type="reaction ID" value="UER00135"/>
</dbReference>
<dbReference type="Proteomes" id="UP000001592">
    <property type="component" value="Chromosome"/>
</dbReference>
<dbReference type="GO" id="GO:0005829">
    <property type="term" value="C:cytosol"/>
    <property type="evidence" value="ECO:0007669"/>
    <property type="project" value="TreeGrafter"/>
</dbReference>
<dbReference type="GO" id="GO:0003937">
    <property type="term" value="F:IMP cyclohydrolase activity"/>
    <property type="evidence" value="ECO:0007669"/>
    <property type="project" value="UniProtKB-UniRule"/>
</dbReference>
<dbReference type="GO" id="GO:0004643">
    <property type="term" value="F:phosphoribosylaminoimidazolecarboxamide formyltransferase activity"/>
    <property type="evidence" value="ECO:0007669"/>
    <property type="project" value="UniProtKB-UniRule"/>
</dbReference>
<dbReference type="GO" id="GO:0006189">
    <property type="term" value="P:'de novo' IMP biosynthetic process"/>
    <property type="evidence" value="ECO:0007669"/>
    <property type="project" value="UniProtKB-UniRule"/>
</dbReference>
<dbReference type="CDD" id="cd01421">
    <property type="entry name" value="IMPCH"/>
    <property type="match status" value="1"/>
</dbReference>
<dbReference type="FunFam" id="3.40.140.20:FF:000001">
    <property type="entry name" value="Bifunctional purine biosynthesis protein PurH"/>
    <property type="match status" value="1"/>
</dbReference>
<dbReference type="FunFam" id="3.40.50.1380:FF:000001">
    <property type="entry name" value="Bifunctional purine biosynthesis protein PurH"/>
    <property type="match status" value="1"/>
</dbReference>
<dbReference type="Gene3D" id="3.40.140.20">
    <property type="match status" value="2"/>
</dbReference>
<dbReference type="Gene3D" id="3.40.50.1380">
    <property type="entry name" value="Methylglyoxal synthase-like domain"/>
    <property type="match status" value="1"/>
</dbReference>
<dbReference type="HAMAP" id="MF_00139">
    <property type="entry name" value="PurH"/>
    <property type="match status" value="1"/>
</dbReference>
<dbReference type="InterPro" id="IPR024051">
    <property type="entry name" value="AICAR_Tfase_dup_dom_sf"/>
</dbReference>
<dbReference type="InterPro" id="IPR016193">
    <property type="entry name" value="Cytidine_deaminase-like"/>
</dbReference>
<dbReference type="InterPro" id="IPR011607">
    <property type="entry name" value="MGS-like_dom"/>
</dbReference>
<dbReference type="InterPro" id="IPR036914">
    <property type="entry name" value="MGS-like_dom_sf"/>
</dbReference>
<dbReference type="InterPro" id="IPR002695">
    <property type="entry name" value="PurH-like"/>
</dbReference>
<dbReference type="NCBIfam" id="NF002049">
    <property type="entry name" value="PRK00881.1"/>
    <property type="match status" value="1"/>
</dbReference>
<dbReference type="NCBIfam" id="TIGR00355">
    <property type="entry name" value="purH"/>
    <property type="match status" value="1"/>
</dbReference>
<dbReference type="PANTHER" id="PTHR11692:SF0">
    <property type="entry name" value="BIFUNCTIONAL PURINE BIOSYNTHESIS PROTEIN ATIC"/>
    <property type="match status" value="1"/>
</dbReference>
<dbReference type="PANTHER" id="PTHR11692">
    <property type="entry name" value="BIFUNCTIONAL PURINE BIOSYNTHESIS PROTEIN PURH"/>
    <property type="match status" value="1"/>
</dbReference>
<dbReference type="Pfam" id="PF01808">
    <property type="entry name" value="AICARFT_IMPCHas"/>
    <property type="match status" value="1"/>
</dbReference>
<dbReference type="Pfam" id="PF02142">
    <property type="entry name" value="MGS"/>
    <property type="match status" value="1"/>
</dbReference>
<dbReference type="PIRSF" id="PIRSF000414">
    <property type="entry name" value="AICARFT_IMPCHas"/>
    <property type="match status" value="1"/>
</dbReference>
<dbReference type="SMART" id="SM00798">
    <property type="entry name" value="AICARFT_IMPCHas"/>
    <property type="match status" value="1"/>
</dbReference>
<dbReference type="SMART" id="SM00851">
    <property type="entry name" value="MGS"/>
    <property type="match status" value="1"/>
</dbReference>
<dbReference type="SUPFAM" id="SSF53927">
    <property type="entry name" value="Cytidine deaminase-like"/>
    <property type="match status" value="1"/>
</dbReference>
<dbReference type="SUPFAM" id="SSF52335">
    <property type="entry name" value="Methylglyoxal synthase-like"/>
    <property type="match status" value="1"/>
</dbReference>
<dbReference type="PROSITE" id="PS51855">
    <property type="entry name" value="MGS"/>
    <property type="match status" value="1"/>
</dbReference>
<keyword id="KW-0378">Hydrolase</keyword>
<keyword id="KW-0511">Multifunctional enzyme</keyword>
<keyword id="KW-0658">Purine biosynthesis</keyword>
<keyword id="KW-0808">Transferase</keyword>
<sequence>MGVVAKNFPIPDLHRVRRILLSVSDKTGVVAFAQALHATYSVELISTGGTAKTLIAAGLPVKDVSEVTGFPEIMDGRVKTLHPLIHGALLGIREDPSHREAMEKNSIHGIDLLVVNLYPFEETIQSGADGKTILENIDIGGPAMIRAAAKNYAYTGVVTAINDYDSILAELKQHNGCLSLSMRHQLAMRAYAHTAAYDTAIAAWFARDLKIETPSWQSFSGHLESVMRYGENPHQQAAFYRNNEKRFGVATAKLLQGKALSYNNLNDTDAAFELVAEFDPQKTAAVALIKHANPCGVAEGENLKDAYLKALMCDNVSAFGGIVALNQTLDEECAEEIVKIFTEVIIAPDATMAAREIIAKKKNLRLLITGGIPNPRCGGLLAKTLAGGILVQSRDNVVIDDLKLQVVTKRTPTQDEMRDLQFAFRVAKHVKSNAIVYAKNSATVGIGAGQMSRIDSAKIAASKAAESARRAGLTETLTKGSVVASDAFFPFADGLLAAAAAGATAVIQPGGSMRDEEVITAADEQGLAMVFTGIRHFRH</sequence>
<evidence type="ECO:0000255" key="1">
    <source>
        <dbReference type="HAMAP-Rule" id="MF_00139"/>
    </source>
</evidence>
<evidence type="ECO:0000255" key="2">
    <source>
        <dbReference type="PROSITE-ProRule" id="PRU01202"/>
    </source>
</evidence>
<accession>A9IZD0</accession>
<name>PUR9_BART1</name>
<gene>
    <name evidence="1" type="primary">purH</name>
    <name type="ordered locus">BT_2562</name>
</gene>
<feature type="chain" id="PRO_1000076474" description="Bifunctional purine biosynthesis protein PurH">
    <location>
        <begin position="1"/>
        <end position="539"/>
    </location>
</feature>
<feature type="domain" description="MGS-like" evidence="2">
    <location>
        <begin position="8"/>
        <end position="159"/>
    </location>
</feature>
<comment type="catalytic activity">
    <reaction evidence="1">
        <text>(6R)-10-formyltetrahydrofolate + 5-amino-1-(5-phospho-beta-D-ribosyl)imidazole-4-carboxamide = 5-formamido-1-(5-phospho-D-ribosyl)imidazole-4-carboxamide + (6S)-5,6,7,8-tetrahydrofolate</text>
        <dbReference type="Rhea" id="RHEA:22192"/>
        <dbReference type="ChEBI" id="CHEBI:57453"/>
        <dbReference type="ChEBI" id="CHEBI:58467"/>
        <dbReference type="ChEBI" id="CHEBI:58475"/>
        <dbReference type="ChEBI" id="CHEBI:195366"/>
        <dbReference type="EC" id="2.1.2.3"/>
    </reaction>
</comment>
<comment type="catalytic activity">
    <reaction evidence="1">
        <text>IMP + H2O = 5-formamido-1-(5-phospho-D-ribosyl)imidazole-4-carboxamide</text>
        <dbReference type="Rhea" id="RHEA:18445"/>
        <dbReference type="ChEBI" id="CHEBI:15377"/>
        <dbReference type="ChEBI" id="CHEBI:58053"/>
        <dbReference type="ChEBI" id="CHEBI:58467"/>
        <dbReference type="EC" id="3.5.4.10"/>
    </reaction>
</comment>
<comment type="pathway">
    <text evidence="1">Purine metabolism; IMP biosynthesis via de novo pathway; 5-formamido-1-(5-phospho-D-ribosyl)imidazole-4-carboxamide from 5-amino-1-(5-phospho-D-ribosyl)imidazole-4-carboxamide (10-formyl THF route): step 1/1.</text>
</comment>
<comment type="pathway">
    <text evidence="1">Purine metabolism; IMP biosynthesis via de novo pathway; IMP from 5-formamido-1-(5-phospho-D-ribosyl)imidazole-4-carboxamide: step 1/1.</text>
</comment>
<comment type="domain">
    <text evidence="1">The IMP cyclohydrolase activity resides in the N-terminal region.</text>
</comment>
<comment type="similarity">
    <text evidence="1">Belongs to the PurH family.</text>
</comment>
<protein>
    <recommendedName>
        <fullName evidence="1">Bifunctional purine biosynthesis protein PurH</fullName>
    </recommendedName>
    <domain>
        <recommendedName>
            <fullName evidence="1">Phosphoribosylaminoimidazolecarboxamide formyltransferase</fullName>
            <ecNumber evidence="1">2.1.2.3</ecNumber>
        </recommendedName>
        <alternativeName>
            <fullName evidence="1">AICAR transformylase</fullName>
        </alternativeName>
    </domain>
    <domain>
        <recommendedName>
            <fullName evidence="1">IMP cyclohydrolase</fullName>
            <ecNumber evidence="1">3.5.4.10</ecNumber>
        </recommendedName>
        <alternativeName>
            <fullName evidence="1">ATIC</fullName>
        </alternativeName>
        <alternativeName>
            <fullName evidence="1">IMP synthase</fullName>
        </alternativeName>
        <alternativeName>
            <fullName evidence="1">Inosinicase</fullName>
        </alternativeName>
    </domain>
</protein>
<reference key="1">
    <citation type="journal article" date="2007" name="Nat. Genet.">
        <title>Genomic analysis of Bartonella identifies type IV secretion systems as host adaptability factors.</title>
        <authorList>
            <person name="Saenz H.L."/>
            <person name="Engel P."/>
            <person name="Stoeckli M.C."/>
            <person name="Lanz C."/>
            <person name="Raddatz G."/>
            <person name="Vayssier-Taussat M."/>
            <person name="Birtles R."/>
            <person name="Schuster S.C."/>
            <person name="Dehio C."/>
        </authorList>
    </citation>
    <scope>NUCLEOTIDE SEQUENCE [LARGE SCALE GENOMIC DNA]</scope>
    <source>
        <strain>CIP 105476 / IBS 506</strain>
    </source>
</reference>